<name>RL6_BRUA1</name>
<evidence type="ECO:0000255" key="1">
    <source>
        <dbReference type="HAMAP-Rule" id="MF_01365"/>
    </source>
</evidence>
<evidence type="ECO:0000305" key="2"/>
<sequence length="177" mass="19138">MSRIGKKPVPVPAGVTGSVEGQTVKAKGAKGELSFVVHDEVLVKMEDGAVRVDPRDQSKEARSKWGMSRTMISNIFVGVKDGFEKKLEISGVGYRAAMQGKNLQLSLGFSHEVVYDVPAGITVAVPKPTEIVVTGIDKQQVGQVAAEIREYRGPEPYKGKGVKYAGEKIVRKEGKKK</sequence>
<protein>
    <recommendedName>
        <fullName evidence="1">Large ribosomal subunit protein uL6</fullName>
    </recommendedName>
    <alternativeName>
        <fullName evidence="2">50S ribosomal protein L6</fullName>
    </alternativeName>
</protein>
<organism>
    <name type="scientific">Brucella abortus (strain S19)</name>
    <dbReference type="NCBI Taxonomy" id="430066"/>
    <lineage>
        <taxon>Bacteria</taxon>
        <taxon>Pseudomonadati</taxon>
        <taxon>Pseudomonadota</taxon>
        <taxon>Alphaproteobacteria</taxon>
        <taxon>Hyphomicrobiales</taxon>
        <taxon>Brucellaceae</taxon>
        <taxon>Brucella/Ochrobactrum group</taxon>
        <taxon>Brucella</taxon>
    </lineage>
</organism>
<gene>
    <name evidence="1" type="primary">rplF</name>
    <name type="ordered locus">BAbS19_I11560</name>
</gene>
<dbReference type="EMBL" id="CP000887">
    <property type="protein sequence ID" value="ACD72661.1"/>
    <property type="molecule type" value="Genomic_DNA"/>
</dbReference>
<dbReference type="RefSeq" id="WP_002964347.1">
    <property type="nucleotide sequence ID" value="NC_010742.1"/>
</dbReference>
<dbReference type="SMR" id="B2S664"/>
<dbReference type="GeneID" id="93016454"/>
<dbReference type="KEGG" id="bmc:BAbS19_I11560"/>
<dbReference type="HOGENOM" id="CLU_065464_1_2_5"/>
<dbReference type="Proteomes" id="UP000002565">
    <property type="component" value="Chromosome 1"/>
</dbReference>
<dbReference type="GO" id="GO:0022625">
    <property type="term" value="C:cytosolic large ribosomal subunit"/>
    <property type="evidence" value="ECO:0007669"/>
    <property type="project" value="TreeGrafter"/>
</dbReference>
<dbReference type="GO" id="GO:0019843">
    <property type="term" value="F:rRNA binding"/>
    <property type="evidence" value="ECO:0007669"/>
    <property type="project" value="UniProtKB-UniRule"/>
</dbReference>
<dbReference type="GO" id="GO:0003735">
    <property type="term" value="F:structural constituent of ribosome"/>
    <property type="evidence" value="ECO:0007669"/>
    <property type="project" value="InterPro"/>
</dbReference>
<dbReference type="GO" id="GO:0002181">
    <property type="term" value="P:cytoplasmic translation"/>
    <property type="evidence" value="ECO:0007669"/>
    <property type="project" value="TreeGrafter"/>
</dbReference>
<dbReference type="FunFam" id="3.90.930.12:FF:000001">
    <property type="entry name" value="50S ribosomal protein L6"/>
    <property type="match status" value="1"/>
</dbReference>
<dbReference type="Gene3D" id="3.90.930.12">
    <property type="entry name" value="Ribosomal protein L6, alpha-beta domain"/>
    <property type="match status" value="2"/>
</dbReference>
<dbReference type="HAMAP" id="MF_01365_B">
    <property type="entry name" value="Ribosomal_uL6_B"/>
    <property type="match status" value="1"/>
</dbReference>
<dbReference type="InterPro" id="IPR000702">
    <property type="entry name" value="Ribosomal_uL6-like"/>
</dbReference>
<dbReference type="InterPro" id="IPR036789">
    <property type="entry name" value="Ribosomal_uL6-like_a/b-dom_sf"/>
</dbReference>
<dbReference type="InterPro" id="IPR020040">
    <property type="entry name" value="Ribosomal_uL6_a/b-dom"/>
</dbReference>
<dbReference type="InterPro" id="IPR019906">
    <property type="entry name" value="Ribosomal_uL6_bac-type"/>
</dbReference>
<dbReference type="InterPro" id="IPR002358">
    <property type="entry name" value="Ribosomal_uL6_CS"/>
</dbReference>
<dbReference type="NCBIfam" id="TIGR03654">
    <property type="entry name" value="L6_bact"/>
    <property type="match status" value="1"/>
</dbReference>
<dbReference type="PANTHER" id="PTHR11655">
    <property type="entry name" value="60S/50S RIBOSOMAL PROTEIN L6/L9"/>
    <property type="match status" value="1"/>
</dbReference>
<dbReference type="PANTHER" id="PTHR11655:SF14">
    <property type="entry name" value="LARGE RIBOSOMAL SUBUNIT PROTEIN UL6M"/>
    <property type="match status" value="1"/>
</dbReference>
<dbReference type="Pfam" id="PF00347">
    <property type="entry name" value="Ribosomal_L6"/>
    <property type="match status" value="2"/>
</dbReference>
<dbReference type="PIRSF" id="PIRSF002162">
    <property type="entry name" value="Ribosomal_L6"/>
    <property type="match status" value="1"/>
</dbReference>
<dbReference type="PRINTS" id="PR00059">
    <property type="entry name" value="RIBOSOMALL6"/>
</dbReference>
<dbReference type="SUPFAM" id="SSF56053">
    <property type="entry name" value="Ribosomal protein L6"/>
    <property type="match status" value="2"/>
</dbReference>
<dbReference type="PROSITE" id="PS00525">
    <property type="entry name" value="RIBOSOMAL_L6_1"/>
    <property type="match status" value="1"/>
</dbReference>
<reference key="1">
    <citation type="journal article" date="2008" name="PLoS ONE">
        <title>Genome sequence of Brucella abortus vaccine strain S19 compared to virulent strains yields candidate virulence genes.</title>
        <authorList>
            <person name="Crasta O.R."/>
            <person name="Folkerts O."/>
            <person name="Fei Z."/>
            <person name="Mane S.P."/>
            <person name="Evans C."/>
            <person name="Martino-Catt S."/>
            <person name="Bricker B."/>
            <person name="Yu G."/>
            <person name="Du L."/>
            <person name="Sobral B.W."/>
        </authorList>
    </citation>
    <scope>NUCLEOTIDE SEQUENCE [LARGE SCALE GENOMIC DNA]</scope>
    <source>
        <strain>S19</strain>
    </source>
</reference>
<proteinExistence type="inferred from homology"/>
<feature type="chain" id="PRO_1000143950" description="Large ribosomal subunit protein uL6">
    <location>
        <begin position="1"/>
        <end position="177"/>
    </location>
</feature>
<keyword id="KW-0687">Ribonucleoprotein</keyword>
<keyword id="KW-0689">Ribosomal protein</keyword>
<keyword id="KW-0694">RNA-binding</keyword>
<keyword id="KW-0699">rRNA-binding</keyword>
<comment type="function">
    <text evidence="1">This protein binds to the 23S rRNA, and is important in its secondary structure. It is located near the subunit interface in the base of the L7/L12 stalk, and near the tRNA binding site of the peptidyltransferase center.</text>
</comment>
<comment type="subunit">
    <text evidence="1">Part of the 50S ribosomal subunit.</text>
</comment>
<comment type="similarity">
    <text evidence="1">Belongs to the universal ribosomal protein uL6 family.</text>
</comment>
<accession>B2S664</accession>